<reference key="1">
    <citation type="journal article" date="1998" name="J. Biol. Chem.">
        <title>Inhibition of Hsp70 ATPase activity and protein renaturation by a novel Hsp70-binding protein.</title>
        <authorList>
            <person name="Raynes D.A."/>
            <person name="Guerriero V. Jr."/>
        </authorList>
    </citation>
    <scope>NUCLEOTIDE SEQUENCE [MRNA] (ISOFORM 1)</scope>
    <scope>FUNCTION</scope>
    <scope>INTERACTION WITH HSPA1A</scope>
    <scope>TISSUE SPECIFICITY</scope>
    <source>
        <tissue>Heart</tissue>
    </source>
</reference>
<reference key="2">
    <citation type="journal article" date="2000" name="Biochim. Biophys. Acta">
        <title>Isolation and characterization of isoforms of HspBP1, inhibitors of Hsp70.</title>
        <authorList>
            <person name="Guerriero V. Jr."/>
            <person name="Raynes D.A."/>
        </authorList>
    </citation>
    <scope>NUCLEOTIDE SEQUENCE [MRNA] (ISOFORM 1)</scope>
    <scope>FUNCTION</scope>
    <scope>POLYMORPHISM OF POLY-GLY REGION</scope>
    <scope>VARIANT GLY-GLY-GLY-30 INS</scope>
    <source>
        <tissue>Heart</tissue>
    </source>
</reference>
<reference key="3">
    <citation type="submission" date="1998-11" db="EMBL/GenBank/DDBJ databases">
        <authorList>
            <person name="Tanimura S."/>
            <person name="Tsujimoto M."/>
            <person name="Kohno M."/>
        </authorList>
    </citation>
    <scope>NUCLEOTIDE SEQUENCE [MRNA] (ISOFORM 1)</scope>
</reference>
<reference key="4">
    <citation type="journal article" date="2004" name="Proc. Natl. Acad. Sci. U.S.A.">
        <title>Large-scale cDNA transfection screening for genes related to cancer development and progression.</title>
        <authorList>
            <person name="Wan D."/>
            <person name="Gong Y."/>
            <person name="Qin W."/>
            <person name="Zhang P."/>
            <person name="Li J."/>
            <person name="Wei L."/>
            <person name="Zhou X."/>
            <person name="Li H."/>
            <person name="Qiu X."/>
            <person name="Zhong F."/>
            <person name="He L."/>
            <person name="Yu J."/>
            <person name="Yao G."/>
            <person name="Jiang H."/>
            <person name="Qian L."/>
            <person name="Yu Y."/>
            <person name="Shu H."/>
            <person name="Chen X."/>
            <person name="Xu H."/>
            <person name="Guo M."/>
            <person name="Pan Z."/>
            <person name="Chen Y."/>
            <person name="Ge C."/>
            <person name="Yang S."/>
            <person name="Gu J."/>
        </authorList>
    </citation>
    <scope>NUCLEOTIDE SEQUENCE [LARGE SCALE MRNA] (ISOFORM 1)</scope>
    <scope>VARIANT GLY-GLY-GLY-30 INS</scope>
</reference>
<reference key="5">
    <citation type="journal article" date="2004" name="Nat. Genet.">
        <title>Complete sequencing and characterization of 21,243 full-length human cDNAs.</title>
        <authorList>
            <person name="Ota T."/>
            <person name="Suzuki Y."/>
            <person name="Nishikawa T."/>
            <person name="Otsuki T."/>
            <person name="Sugiyama T."/>
            <person name="Irie R."/>
            <person name="Wakamatsu A."/>
            <person name="Hayashi K."/>
            <person name="Sato H."/>
            <person name="Nagai K."/>
            <person name="Kimura K."/>
            <person name="Makita H."/>
            <person name="Sekine M."/>
            <person name="Obayashi M."/>
            <person name="Nishi T."/>
            <person name="Shibahara T."/>
            <person name="Tanaka T."/>
            <person name="Ishii S."/>
            <person name="Yamamoto J."/>
            <person name="Saito K."/>
            <person name="Kawai Y."/>
            <person name="Isono Y."/>
            <person name="Nakamura Y."/>
            <person name="Nagahari K."/>
            <person name="Murakami K."/>
            <person name="Yasuda T."/>
            <person name="Iwayanagi T."/>
            <person name="Wagatsuma M."/>
            <person name="Shiratori A."/>
            <person name="Sudo H."/>
            <person name="Hosoiri T."/>
            <person name="Kaku Y."/>
            <person name="Kodaira H."/>
            <person name="Kondo H."/>
            <person name="Sugawara M."/>
            <person name="Takahashi M."/>
            <person name="Kanda K."/>
            <person name="Yokoi T."/>
            <person name="Furuya T."/>
            <person name="Kikkawa E."/>
            <person name="Omura Y."/>
            <person name="Abe K."/>
            <person name="Kamihara K."/>
            <person name="Katsuta N."/>
            <person name="Sato K."/>
            <person name="Tanikawa M."/>
            <person name="Yamazaki M."/>
            <person name="Ninomiya K."/>
            <person name="Ishibashi T."/>
            <person name="Yamashita H."/>
            <person name="Murakawa K."/>
            <person name="Fujimori K."/>
            <person name="Tanai H."/>
            <person name="Kimata M."/>
            <person name="Watanabe M."/>
            <person name="Hiraoka S."/>
            <person name="Chiba Y."/>
            <person name="Ishida S."/>
            <person name="Ono Y."/>
            <person name="Takiguchi S."/>
            <person name="Watanabe S."/>
            <person name="Yosida M."/>
            <person name="Hotuta T."/>
            <person name="Kusano J."/>
            <person name="Kanehori K."/>
            <person name="Takahashi-Fujii A."/>
            <person name="Hara H."/>
            <person name="Tanase T.-O."/>
            <person name="Nomura Y."/>
            <person name="Togiya S."/>
            <person name="Komai F."/>
            <person name="Hara R."/>
            <person name="Takeuchi K."/>
            <person name="Arita M."/>
            <person name="Imose N."/>
            <person name="Musashino K."/>
            <person name="Yuuki H."/>
            <person name="Oshima A."/>
            <person name="Sasaki N."/>
            <person name="Aotsuka S."/>
            <person name="Yoshikawa Y."/>
            <person name="Matsunawa H."/>
            <person name="Ichihara T."/>
            <person name="Shiohata N."/>
            <person name="Sano S."/>
            <person name="Moriya S."/>
            <person name="Momiyama H."/>
            <person name="Satoh N."/>
            <person name="Takami S."/>
            <person name="Terashima Y."/>
            <person name="Suzuki O."/>
            <person name="Nakagawa S."/>
            <person name="Senoh A."/>
            <person name="Mizoguchi H."/>
            <person name="Goto Y."/>
            <person name="Shimizu F."/>
            <person name="Wakebe H."/>
            <person name="Hishigaki H."/>
            <person name="Watanabe T."/>
            <person name="Sugiyama A."/>
            <person name="Takemoto M."/>
            <person name="Kawakami B."/>
            <person name="Yamazaki M."/>
            <person name="Watanabe K."/>
            <person name="Kumagai A."/>
            <person name="Itakura S."/>
            <person name="Fukuzumi Y."/>
            <person name="Fujimori Y."/>
            <person name="Komiyama M."/>
            <person name="Tashiro H."/>
            <person name="Tanigami A."/>
            <person name="Fujiwara T."/>
            <person name="Ono T."/>
            <person name="Yamada K."/>
            <person name="Fujii Y."/>
            <person name="Ozaki K."/>
            <person name="Hirao M."/>
            <person name="Ohmori Y."/>
            <person name="Kawabata A."/>
            <person name="Hikiji T."/>
            <person name="Kobatake N."/>
            <person name="Inagaki H."/>
            <person name="Ikema Y."/>
            <person name="Okamoto S."/>
            <person name="Okitani R."/>
            <person name="Kawakami T."/>
            <person name="Noguchi S."/>
            <person name="Itoh T."/>
            <person name="Shigeta K."/>
            <person name="Senba T."/>
            <person name="Matsumura K."/>
            <person name="Nakajima Y."/>
            <person name="Mizuno T."/>
            <person name="Morinaga M."/>
            <person name="Sasaki M."/>
            <person name="Togashi T."/>
            <person name="Oyama M."/>
            <person name="Hata H."/>
            <person name="Watanabe M."/>
            <person name="Komatsu T."/>
            <person name="Mizushima-Sugano J."/>
            <person name="Satoh T."/>
            <person name="Shirai Y."/>
            <person name="Takahashi Y."/>
            <person name="Nakagawa K."/>
            <person name="Okumura K."/>
            <person name="Nagase T."/>
            <person name="Nomura N."/>
            <person name="Kikuchi H."/>
            <person name="Masuho Y."/>
            <person name="Yamashita R."/>
            <person name="Nakai K."/>
            <person name="Yada T."/>
            <person name="Nakamura Y."/>
            <person name="Ohara O."/>
            <person name="Isogai T."/>
            <person name="Sugano S."/>
        </authorList>
    </citation>
    <scope>NUCLEOTIDE SEQUENCE [LARGE SCALE MRNA] (ISOFORMS 2 AND 3)</scope>
    <scope>VARIANTS VAL-25 AND GLY-GLY-GLY-30 INS</scope>
    <source>
        <tissue>Amygdala</tissue>
        <tissue>Spleen</tissue>
    </source>
</reference>
<reference key="6">
    <citation type="submission" date="2004-06" db="EMBL/GenBank/DDBJ databases">
        <title>Cloning of human full open reading frames in Gateway(TM) system entry vector (pDONR201).</title>
        <authorList>
            <person name="Ebert L."/>
            <person name="Schick M."/>
            <person name="Neubert P."/>
            <person name="Schatten R."/>
            <person name="Henze S."/>
            <person name="Korn B."/>
        </authorList>
    </citation>
    <scope>NUCLEOTIDE SEQUENCE [LARGE SCALE MRNA] (ISOFORM 1)</scope>
</reference>
<reference key="7">
    <citation type="journal article" date="2005" name="DNA Res.">
        <title>Signal sequence and keyword trap in silico for selection of full-length human cDNAs encoding secretion or membrane proteins from oligo-capped cDNA libraries.</title>
        <authorList>
            <person name="Otsuki T."/>
            <person name="Ota T."/>
            <person name="Nishikawa T."/>
            <person name="Hayashi K."/>
            <person name="Suzuki Y."/>
            <person name="Yamamoto J."/>
            <person name="Wakamatsu A."/>
            <person name="Kimura K."/>
            <person name="Sakamoto K."/>
            <person name="Hatano N."/>
            <person name="Kawai Y."/>
            <person name="Ishii S."/>
            <person name="Saito K."/>
            <person name="Kojima S."/>
            <person name="Sugiyama T."/>
            <person name="Ono T."/>
            <person name="Okano K."/>
            <person name="Yoshikawa Y."/>
            <person name="Aotsuka S."/>
            <person name="Sasaki N."/>
            <person name="Hattori A."/>
            <person name="Okumura K."/>
            <person name="Nagai K."/>
            <person name="Sugano S."/>
            <person name="Isogai T."/>
        </authorList>
    </citation>
    <scope>NUCLEOTIDE SEQUENCE [LARGE SCALE MRNA] (ISOFORM 1)</scope>
    <scope>VARIANT GLY-GLY-GLY-30 INS</scope>
</reference>
<reference key="8">
    <citation type="journal article" date="2004" name="Genome Res.">
        <title>The status, quality, and expansion of the NIH full-length cDNA project: the Mammalian Gene Collection (MGC).</title>
        <authorList>
            <consortium name="The MGC Project Team"/>
        </authorList>
    </citation>
    <scope>NUCLEOTIDE SEQUENCE [LARGE SCALE MRNA] (ISOFORM 1)</scope>
    <scope>VARIANT GLY-GLY-GLY-30 INS</scope>
    <source>
        <tissue>Lung</tissue>
        <tissue>Placenta</tissue>
    </source>
</reference>
<reference key="9">
    <citation type="journal article" date="2003" name="J. Biol. Chem.">
        <title>HspBP1, an Hsp70 cochaperone, has two structural domains and is capable of altering the conformation of the Hsp70 ATPase domain.</title>
        <authorList>
            <person name="McLellan C.A."/>
            <person name="Raynes D.A."/>
            <person name="Guerriero V. Jr."/>
        </authorList>
    </citation>
    <scope>FUNCTION</scope>
    <scope>INTERACTION WITH HSPA1A</scope>
</reference>
<reference key="10">
    <citation type="journal article" date="2004" name="Mol. Biol. Cell">
        <title>The cochaperone HspBP1 inhibits the CHIP ubiquitin ligase and stimulates the maturation of the cystic fibrosis transmembrane conductance regulator.</title>
        <authorList>
            <person name="Alberti S."/>
            <person name="Boehse K."/>
            <person name="Arndt V."/>
            <person name="Schmitz A."/>
            <person name="Hoehfeld J."/>
        </authorList>
    </citation>
    <scope>FUNCTION</scope>
    <scope>INTERACTION WITH HSPA1A AND STUB1</scope>
</reference>
<reference key="11">
    <citation type="journal article" date="2008" name="Proc. Natl. Acad. Sci. U.S.A.">
        <title>A quantitative atlas of mitotic phosphorylation.</title>
        <authorList>
            <person name="Dephoure N."/>
            <person name="Zhou C."/>
            <person name="Villen J."/>
            <person name="Beausoleil S.A."/>
            <person name="Bakalarski C.E."/>
            <person name="Elledge S.J."/>
            <person name="Gygi S.P."/>
        </authorList>
    </citation>
    <scope>PHOSPHORYLATION [LARGE SCALE ANALYSIS] AT SER-351 AND SER-356</scope>
    <scope>IDENTIFICATION BY MASS SPECTROMETRY [LARGE SCALE ANALYSIS]</scope>
    <source>
        <tissue>Cervix carcinoma</tissue>
    </source>
</reference>
<reference key="12">
    <citation type="journal article" date="2010" name="Sci. Signal.">
        <title>Quantitative phosphoproteomics reveals widespread full phosphorylation site occupancy during mitosis.</title>
        <authorList>
            <person name="Olsen J.V."/>
            <person name="Vermeulen M."/>
            <person name="Santamaria A."/>
            <person name="Kumar C."/>
            <person name="Miller M.L."/>
            <person name="Jensen L.J."/>
            <person name="Gnad F."/>
            <person name="Cox J."/>
            <person name="Jensen T.S."/>
            <person name="Nigg E.A."/>
            <person name="Brunak S."/>
            <person name="Mann M."/>
        </authorList>
    </citation>
    <scope>PHOSPHORYLATION [LARGE SCALE ANALYSIS] AT SER-356</scope>
    <scope>IDENTIFICATION BY MASS SPECTROMETRY [LARGE SCALE ANALYSIS]</scope>
    <source>
        <tissue>Cervix carcinoma</tissue>
    </source>
</reference>
<reference key="13">
    <citation type="journal article" date="2011" name="J. Biol. Chem.">
        <title>The heat shock-binding protein (HspBP1) protects cells against the cytotoxic action of the Tag7-Hsp70 complex.</title>
        <authorList>
            <person name="Yashin D.V."/>
            <person name="Dukhanina E.A."/>
            <person name="Kabanova O.D."/>
            <person name="Romanova E.A."/>
            <person name="Lukyanova T.I."/>
            <person name="Tonevitskii A.G."/>
            <person name="Raynes D.A."/>
            <person name="Gnuchev N.V."/>
            <person name="Guerriero V."/>
            <person name="Georgiev G.P."/>
            <person name="Sashchenko L.P."/>
        </authorList>
    </citation>
    <scope>FUNCTION</scope>
    <scope>INTERACTION WITH PGLYRP1</scope>
</reference>
<reference key="14">
    <citation type="journal article" date="2011" name="BMC Syst. Biol.">
        <title>Initial characterization of the human central proteome.</title>
        <authorList>
            <person name="Burkard T.R."/>
            <person name="Planyavsky M."/>
            <person name="Kaupe I."/>
            <person name="Breitwieser F.P."/>
            <person name="Buerckstuemmer T."/>
            <person name="Bennett K.L."/>
            <person name="Superti-Furga G."/>
            <person name="Colinge J."/>
        </authorList>
    </citation>
    <scope>IDENTIFICATION BY MASS SPECTROMETRY [LARGE SCALE ANALYSIS]</scope>
</reference>
<reference key="15">
    <citation type="journal article" date="2011" name="Sci. Signal.">
        <title>System-wide temporal characterization of the proteome and phosphoproteome of human embryonic stem cell differentiation.</title>
        <authorList>
            <person name="Rigbolt K.T."/>
            <person name="Prokhorova T.A."/>
            <person name="Akimov V."/>
            <person name="Henningsen J."/>
            <person name="Johansen P.T."/>
            <person name="Kratchmarova I."/>
            <person name="Kassem M."/>
            <person name="Mann M."/>
            <person name="Olsen J.V."/>
            <person name="Blagoev B."/>
        </authorList>
    </citation>
    <scope>PHOSPHORYLATION [LARGE SCALE ANALYSIS] AT SER-356</scope>
    <scope>IDENTIFICATION BY MASS SPECTROMETRY [LARGE SCALE ANALYSIS]</scope>
</reference>
<reference key="16">
    <citation type="journal article" date="2013" name="J. Proteome Res.">
        <title>Toward a comprehensive characterization of a human cancer cell phosphoproteome.</title>
        <authorList>
            <person name="Zhou H."/>
            <person name="Di Palma S."/>
            <person name="Preisinger C."/>
            <person name="Peng M."/>
            <person name="Polat A.N."/>
            <person name="Heck A.J."/>
            <person name="Mohammed S."/>
        </authorList>
    </citation>
    <scope>PHOSPHORYLATION [LARGE SCALE ANALYSIS] AT SER-351 AND SER-356</scope>
    <scope>IDENTIFICATION BY MASS SPECTROMETRY [LARGE SCALE ANALYSIS]</scope>
    <source>
        <tissue>Cervix carcinoma</tissue>
        <tissue>Erythroleukemia</tissue>
    </source>
</reference>
<reference key="17">
    <citation type="journal article" date="2005" name="Mol. Cell">
        <title>Regulation of Hsp70 function by HspBP1: structural analysis reveals an alternate mechanism for Hsp70 nucleotide exchange.</title>
        <authorList>
            <person name="Shomura Y."/>
            <person name="Dragovic Z."/>
            <person name="Chang H.-C."/>
            <person name="Tzvetkov N."/>
            <person name="Young J.C."/>
            <person name="Brodsky J.L."/>
            <person name="Guerriero V. Jr."/>
            <person name="Hartl F.U."/>
            <person name="Bracher A."/>
        </authorList>
    </citation>
    <scope>X-RAY CRYSTALLOGRAPHY (2.1 ANGSTROMS) OF 84-359 IN COMPLEX WITH HSPA1A</scope>
</reference>
<dbReference type="EMBL" id="AF093420">
    <property type="protein sequence ID" value="AAC79703.1"/>
    <property type="molecule type" value="mRNA"/>
</dbReference>
<dbReference type="EMBL" id="AF187859">
    <property type="protein sequence ID" value="AAF35833.1"/>
    <property type="molecule type" value="mRNA"/>
</dbReference>
<dbReference type="EMBL" id="AB020592">
    <property type="protein sequence ID" value="BAB18742.1"/>
    <property type="molecule type" value="mRNA"/>
</dbReference>
<dbReference type="EMBL" id="AF217996">
    <property type="protein sequence ID" value="AAG17238.1"/>
    <property type="molecule type" value="mRNA"/>
</dbReference>
<dbReference type="EMBL" id="AK130636">
    <property type="protein sequence ID" value="BAC85399.1"/>
    <property type="molecule type" value="mRNA"/>
</dbReference>
<dbReference type="EMBL" id="AK294358">
    <property type="protein sequence ID" value="BAG57622.1"/>
    <property type="molecule type" value="mRNA"/>
</dbReference>
<dbReference type="EMBL" id="CR457118">
    <property type="protein sequence ID" value="CAG33399.1"/>
    <property type="molecule type" value="mRNA"/>
</dbReference>
<dbReference type="EMBL" id="AK075293">
    <property type="protein sequence ID" value="BAG52102.1"/>
    <property type="molecule type" value="mRNA"/>
</dbReference>
<dbReference type="EMBL" id="BC001236">
    <property type="protein sequence ID" value="AAH01236.1"/>
    <property type="molecule type" value="mRNA"/>
</dbReference>
<dbReference type="EMBL" id="BC002373">
    <property type="protein sequence ID" value="AAH02373.1"/>
    <property type="molecule type" value="mRNA"/>
</dbReference>
<dbReference type="CCDS" id="CCDS33111.1">
    <molecule id="Q9NZL4-1"/>
</dbReference>
<dbReference type="RefSeq" id="NP_001123578.1">
    <molecule id="Q9NZL4-1"/>
    <property type="nucleotide sequence ID" value="NM_001130106.2"/>
</dbReference>
<dbReference type="RefSeq" id="NP_001284529.1">
    <property type="nucleotide sequence ID" value="NM_001297600.1"/>
</dbReference>
<dbReference type="RefSeq" id="NP_036399.3">
    <molecule id="Q9NZL4-1"/>
    <property type="nucleotide sequence ID" value="NM_012267.4"/>
</dbReference>
<dbReference type="RefSeq" id="XP_016882033.1">
    <molecule id="Q9NZL4-1"/>
    <property type="nucleotide sequence ID" value="XM_017026544.3"/>
</dbReference>
<dbReference type="RefSeq" id="XP_024307205.1">
    <molecule id="Q9NZL4-1"/>
    <property type="nucleotide sequence ID" value="XM_024451437.2"/>
</dbReference>
<dbReference type="RefSeq" id="XP_054176402.1">
    <molecule id="Q9NZL4-1"/>
    <property type="nucleotide sequence ID" value="XM_054320427.1"/>
</dbReference>
<dbReference type="RefSeq" id="XP_054176403.1">
    <molecule id="Q9NZL4-1"/>
    <property type="nucleotide sequence ID" value="XM_054320428.1"/>
</dbReference>
<dbReference type="PDB" id="1XQR">
    <property type="method" value="X-ray"/>
    <property type="resolution" value="2.10 A"/>
    <property type="chains" value="A/B=84-359"/>
</dbReference>
<dbReference type="PDB" id="1XQS">
    <property type="method" value="X-ray"/>
    <property type="resolution" value="2.90 A"/>
    <property type="chains" value="A/B=84-359"/>
</dbReference>
<dbReference type="PDB" id="8X87">
    <property type="method" value="X-ray"/>
    <property type="resolution" value="2.20 A"/>
    <property type="chains" value="A/B/C/D=84-359"/>
</dbReference>
<dbReference type="PDBsum" id="1XQR"/>
<dbReference type="PDBsum" id="1XQS"/>
<dbReference type="PDBsum" id="8X87"/>
<dbReference type="SMR" id="Q9NZL4"/>
<dbReference type="BioGRID" id="117168">
    <property type="interactions" value="175"/>
</dbReference>
<dbReference type="CORUM" id="Q9NZL4"/>
<dbReference type="FunCoup" id="Q9NZL4">
    <property type="interactions" value="1596"/>
</dbReference>
<dbReference type="IntAct" id="Q9NZL4">
    <property type="interactions" value="105"/>
</dbReference>
<dbReference type="MINT" id="Q9NZL4"/>
<dbReference type="STRING" id="9606.ENSP00000255631"/>
<dbReference type="GlyGen" id="Q9NZL4">
    <property type="glycosylation" value="1 site, 1 O-linked glycan (1 site)"/>
</dbReference>
<dbReference type="iPTMnet" id="Q9NZL4"/>
<dbReference type="MetOSite" id="Q9NZL4"/>
<dbReference type="PhosphoSitePlus" id="Q9NZL4"/>
<dbReference type="BioMuta" id="HSPBP1"/>
<dbReference type="DMDM" id="74734730"/>
<dbReference type="jPOST" id="Q9NZL4"/>
<dbReference type="MassIVE" id="Q9NZL4"/>
<dbReference type="PaxDb" id="9606-ENSP00000255631"/>
<dbReference type="PeptideAtlas" id="Q9NZL4"/>
<dbReference type="ProteomicsDB" id="83428">
    <molecule id="Q9NZL4-1"/>
</dbReference>
<dbReference type="ProteomicsDB" id="83429">
    <molecule id="Q9NZL4-2"/>
</dbReference>
<dbReference type="Pumba" id="Q9NZL4"/>
<dbReference type="Antibodypedia" id="33053">
    <property type="antibodies" value="315 antibodies from 23 providers"/>
</dbReference>
<dbReference type="DNASU" id="23640"/>
<dbReference type="Ensembl" id="ENST00000255631.9">
    <molecule id="Q9NZL4-1"/>
    <property type="protein sequence ID" value="ENSP00000255631.4"/>
    <property type="gene ID" value="ENSG00000133265.11"/>
</dbReference>
<dbReference type="Ensembl" id="ENST00000433386.7">
    <molecule id="Q9NZL4-1"/>
    <property type="protein sequence ID" value="ENSP00000398244.1"/>
    <property type="gene ID" value="ENSG00000133265.11"/>
</dbReference>
<dbReference type="Ensembl" id="ENST00000587922.5">
    <molecule id="Q9NZL4-1"/>
    <property type="protein sequence ID" value="ENSP00000467574.1"/>
    <property type="gene ID" value="ENSG00000133265.11"/>
</dbReference>
<dbReference type="GeneID" id="23640"/>
<dbReference type="KEGG" id="hsa:23640"/>
<dbReference type="MANE-Select" id="ENST00000433386.7">
    <property type="protein sequence ID" value="ENSP00000398244.1"/>
    <property type="RefSeq nucleotide sequence ID" value="NM_012267.5"/>
    <property type="RefSeq protein sequence ID" value="NP_036399.3"/>
</dbReference>
<dbReference type="UCSC" id="uc002qkc.4">
    <molecule id="Q9NZL4-1"/>
    <property type="organism name" value="human"/>
</dbReference>
<dbReference type="AGR" id="HGNC:24989"/>
<dbReference type="CTD" id="23640"/>
<dbReference type="DisGeNET" id="23640"/>
<dbReference type="GeneCards" id="HSPBP1"/>
<dbReference type="HGNC" id="HGNC:24989">
    <property type="gene designation" value="HSPBP1"/>
</dbReference>
<dbReference type="HPA" id="ENSG00000133265">
    <property type="expression patterns" value="Low tissue specificity"/>
</dbReference>
<dbReference type="MIM" id="612939">
    <property type="type" value="gene"/>
</dbReference>
<dbReference type="neXtProt" id="NX_Q9NZL4"/>
<dbReference type="OpenTargets" id="ENSG00000133265"/>
<dbReference type="PharmGKB" id="PA164720725"/>
<dbReference type="VEuPathDB" id="HostDB:ENSG00000133265"/>
<dbReference type="eggNOG" id="KOG2160">
    <property type="taxonomic scope" value="Eukaryota"/>
</dbReference>
<dbReference type="GeneTree" id="ENSGT00940000153909"/>
<dbReference type="HOGENOM" id="CLU_049387_0_1_1"/>
<dbReference type="InParanoid" id="Q9NZL4"/>
<dbReference type="OMA" id="CHVQSGL"/>
<dbReference type="OrthoDB" id="10250458at2759"/>
<dbReference type="PAN-GO" id="Q9NZL4">
    <property type="GO annotations" value="1 GO annotation based on evolutionary models"/>
</dbReference>
<dbReference type="PhylomeDB" id="Q9NZL4"/>
<dbReference type="TreeFam" id="TF324307"/>
<dbReference type="PathwayCommons" id="Q9NZL4"/>
<dbReference type="SignaLink" id="Q9NZL4"/>
<dbReference type="BioGRID-ORCS" id="23640">
    <property type="hits" value="11 hits in 1154 CRISPR screens"/>
</dbReference>
<dbReference type="ChiTaRS" id="HSPBP1">
    <property type="organism name" value="human"/>
</dbReference>
<dbReference type="EvolutionaryTrace" id="Q9NZL4"/>
<dbReference type="GeneWiki" id="HSPBP1"/>
<dbReference type="GenomeRNAi" id="23640"/>
<dbReference type="Pharos" id="Q9NZL4">
    <property type="development level" value="Tbio"/>
</dbReference>
<dbReference type="PRO" id="PR:Q9NZL4"/>
<dbReference type="Proteomes" id="UP000005640">
    <property type="component" value="Chromosome 19"/>
</dbReference>
<dbReference type="RNAct" id="Q9NZL4">
    <property type="molecule type" value="protein"/>
</dbReference>
<dbReference type="Bgee" id="ENSG00000133265">
    <property type="expression patterns" value="Expressed in nucleus accumbens and 192 other cell types or tissues"/>
</dbReference>
<dbReference type="ExpressionAtlas" id="Q9NZL4">
    <property type="expression patterns" value="baseline and differential"/>
</dbReference>
<dbReference type="GO" id="GO:0005783">
    <property type="term" value="C:endoplasmic reticulum"/>
    <property type="evidence" value="ECO:0000318"/>
    <property type="project" value="GO_Central"/>
</dbReference>
<dbReference type="GO" id="GO:0005615">
    <property type="term" value="C:extracellular space"/>
    <property type="evidence" value="ECO:0000314"/>
    <property type="project" value="UniProt"/>
</dbReference>
<dbReference type="GO" id="GO:0000774">
    <property type="term" value="F:adenyl-nucleotide exchange factor activity"/>
    <property type="evidence" value="ECO:0000318"/>
    <property type="project" value="GO_Central"/>
</dbReference>
<dbReference type="GO" id="GO:0004857">
    <property type="term" value="F:enzyme inhibitor activity"/>
    <property type="evidence" value="ECO:0000304"/>
    <property type="project" value="ProtInc"/>
</dbReference>
<dbReference type="GO" id="GO:0140313">
    <property type="term" value="F:molecular sequestering activity"/>
    <property type="evidence" value="ECO:0000314"/>
    <property type="project" value="UniProt"/>
</dbReference>
<dbReference type="GO" id="GO:0031625">
    <property type="term" value="F:ubiquitin protein ligase binding"/>
    <property type="evidence" value="ECO:0000353"/>
    <property type="project" value="ARUK-UCL"/>
</dbReference>
<dbReference type="GO" id="GO:0032436">
    <property type="term" value="P:positive regulation of proteasomal ubiquitin-dependent protein catabolic process"/>
    <property type="evidence" value="ECO:0000314"/>
    <property type="project" value="BHF-UCL"/>
</dbReference>
<dbReference type="GO" id="GO:0031398">
    <property type="term" value="P:positive regulation of protein ubiquitination"/>
    <property type="evidence" value="ECO:0000314"/>
    <property type="project" value="BHF-UCL"/>
</dbReference>
<dbReference type="GO" id="GO:0006457">
    <property type="term" value="P:protein folding"/>
    <property type="evidence" value="ECO:0000304"/>
    <property type="project" value="ProtInc"/>
</dbReference>
<dbReference type="FunFam" id="1.25.10.10:FF:000178">
    <property type="entry name" value="hsp70-binding protein 1 isoform X1"/>
    <property type="match status" value="1"/>
</dbReference>
<dbReference type="Gene3D" id="1.25.10.10">
    <property type="entry name" value="Leucine-rich Repeat Variant"/>
    <property type="match status" value="1"/>
</dbReference>
<dbReference type="InterPro" id="IPR011989">
    <property type="entry name" value="ARM-like"/>
</dbReference>
<dbReference type="InterPro" id="IPR016024">
    <property type="entry name" value="ARM-type_fold"/>
</dbReference>
<dbReference type="InterPro" id="IPR050693">
    <property type="entry name" value="Hsp70_NEF-Inhibitors"/>
</dbReference>
<dbReference type="InterPro" id="IPR013918">
    <property type="entry name" value="Nucleotide_exch_fac_Fes1"/>
</dbReference>
<dbReference type="PANTHER" id="PTHR19316:SF18">
    <property type="entry name" value="HSP70-BINDING PROTEIN 1"/>
    <property type="match status" value="1"/>
</dbReference>
<dbReference type="PANTHER" id="PTHR19316">
    <property type="entry name" value="PROTEIN FOLDING REGULATOR"/>
    <property type="match status" value="1"/>
</dbReference>
<dbReference type="Pfam" id="PF08609">
    <property type="entry name" value="Fes1"/>
    <property type="match status" value="1"/>
</dbReference>
<dbReference type="SUPFAM" id="SSF48371">
    <property type="entry name" value="ARM repeat"/>
    <property type="match status" value="1"/>
</dbReference>
<evidence type="ECO:0000256" key="1">
    <source>
        <dbReference type="SAM" id="MobiDB-lite"/>
    </source>
</evidence>
<evidence type="ECO:0000269" key="2">
    <source>
    </source>
</evidence>
<evidence type="ECO:0000269" key="3">
    <source>
    </source>
</evidence>
<evidence type="ECO:0000269" key="4">
    <source>
    </source>
</evidence>
<evidence type="ECO:0000269" key="5">
    <source>
    </source>
</evidence>
<evidence type="ECO:0000269" key="6">
    <source>
    </source>
</evidence>
<evidence type="ECO:0000269" key="7">
    <source>
    </source>
</evidence>
<evidence type="ECO:0000269" key="8">
    <source>
    </source>
</evidence>
<evidence type="ECO:0000269" key="9">
    <source>
    </source>
</evidence>
<evidence type="ECO:0000269" key="10">
    <source>
    </source>
</evidence>
<evidence type="ECO:0000269" key="11">
    <source>
    </source>
</evidence>
<evidence type="ECO:0000303" key="12">
    <source>
    </source>
</evidence>
<evidence type="ECO:0000305" key="13"/>
<evidence type="ECO:0000312" key="14">
    <source>
        <dbReference type="HGNC" id="HGNC:24989"/>
    </source>
</evidence>
<evidence type="ECO:0007744" key="15">
    <source>
    </source>
</evidence>
<evidence type="ECO:0007744" key="16">
    <source>
    </source>
</evidence>
<evidence type="ECO:0007744" key="17">
    <source>
    </source>
</evidence>
<evidence type="ECO:0007744" key="18">
    <source>
    </source>
</evidence>
<evidence type="ECO:0007829" key="19">
    <source>
        <dbReference type="PDB" id="1XQR"/>
    </source>
</evidence>
<feature type="chain" id="PRO_0000084035" description="Hsp70-binding protein 1">
    <location>
        <begin position="1"/>
        <end position="359"/>
    </location>
</feature>
<feature type="repeat" description="ARM 1">
    <location>
        <begin position="132"/>
        <end position="174"/>
    </location>
</feature>
<feature type="repeat" description="ARM 2">
    <location>
        <begin position="177"/>
        <end position="217"/>
    </location>
</feature>
<feature type="repeat" description="ARM 3">
    <location>
        <begin position="220"/>
        <end position="259"/>
    </location>
</feature>
<feature type="repeat" description="ARM 4">
    <location>
        <begin position="262"/>
        <end position="301"/>
    </location>
</feature>
<feature type="region of interest" description="Disordered" evidence="1">
    <location>
        <begin position="1"/>
        <end position="71"/>
    </location>
</feature>
<feature type="compositionally biased region" description="Gly residues" evidence="1">
    <location>
        <begin position="23"/>
        <end position="37"/>
    </location>
</feature>
<feature type="modified residue" description="Phosphoserine" evidence="15 18">
    <location>
        <position position="351"/>
    </location>
</feature>
<feature type="modified residue" description="Phosphoserine" evidence="15 16 17 18">
    <location>
        <position position="356"/>
    </location>
</feature>
<feature type="splice variant" id="VSP_053681" description="In isoform 3." evidence="12">
    <original>M</original>
    <variation>MGGRRAPLKRRLLSRPSRIDPSGRQSCFSGDHLLPLTHSSLLHKRPM</variation>
    <location>
        <position position="1"/>
    </location>
</feature>
<feature type="splice variant" id="VSP_053682" description="In isoform 3." evidence="12">
    <location>
        <begin position="25"/>
        <end position="27"/>
    </location>
</feature>
<feature type="splice variant" id="VSP_015945" description="In isoform 2." evidence="12">
    <location>
        <begin position="204"/>
        <end position="306"/>
    </location>
</feature>
<feature type="sequence variant" id="VAR_080621" description="In dbSNP:rs140649061." evidence="4">
    <original>G</original>
    <variation>V</variation>
    <location>
        <position position="25"/>
    </location>
</feature>
<feature type="sequence variant" id="VAR_023645" evidence="2 4 6 7 9">
    <original>G</original>
    <variation>GGGG</variation>
    <location>
        <position position="30"/>
    </location>
</feature>
<feature type="sequence conflict" description="In Ref. 5; BAG57622." evidence="13" ref="5">
    <original>M</original>
    <variation>V</variation>
    <location>
        <position position="273"/>
    </location>
</feature>
<feature type="helix" evidence="19">
    <location>
        <begin position="87"/>
        <end position="101"/>
    </location>
</feature>
<feature type="helix" evidence="19">
    <location>
        <begin position="110"/>
        <end position="131"/>
    </location>
</feature>
<feature type="helix" evidence="19">
    <location>
        <begin position="134"/>
        <end position="142"/>
    </location>
</feature>
<feature type="helix" evidence="19">
    <location>
        <begin position="145"/>
        <end position="151"/>
    </location>
</feature>
<feature type="turn" evidence="19">
    <location>
        <begin position="152"/>
        <end position="155"/>
    </location>
</feature>
<feature type="helix" evidence="19">
    <location>
        <begin position="159"/>
        <end position="173"/>
    </location>
</feature>
<feature type="helix" evidence="19">
    <location>
        <begin position="177"/>
        <end position="185"/>
    </location>
</feature>
<feature type="helix" evidence="19">
    <location>
        <begin position="188"/>
        <end position="198"/>
    </location>
</feature>
<feature type="helix" evidence="19">
    <location>
        <begin position="202"/>
        <end position="216"/>
    </location>
</feature>
<feature type="helix" evidence="19">
    <location>
        <begin position="220"/>
        <end position="228"/>
    </location>
</feature>
<feature type="helix" evidence="19">
    <location>
        <begin position="231"/>
        <end position="240"/>
    </location>
</feature>
<feature type="helix" evidence="19">
    <location>
        <begin position="244"/>
        <end position="260"/>
    </location>
</feature>
<feature type="helix" evidence="19">
    <location>
        <begin position="262"/>
        <end position="264"/>
    </location>
</feature>
<feature type="helix" evidence="19">
    <location>
        <begin position="265"/>
        <end position="270"/>
    </location>
</feature>
<feature type="helix" evidence="19">
    <location>
        <begin position="273"/>
        <end position="281"/>
    </location>
</feature>
<feature type="helix" evidence="19">
    <location>
        <begin position="288"/>
        <end position="300"/>
    </location>
</feature>
<feature type="helix" evidence="19">
    <location>
        <begin position="304"/>
        <end position="311"/>
    </location>
</feature>
<feature type="helix" evidence="19">
    <location>
        <begin position="313"/>
        <end position="315"/>
    </location>
</feature>
<feature type="helix" evidence="19">
    <location>
        <begin position="317"/>
        <end position="328"/>
    </location>
</feature>
<feature type="helix" evidence="19">
    <location>
        <begin position="332"/>
        <end position="334"/>
    </location>
</feature>
<feature type="helix" evidence="19">
    <location>
        <begin position="335"/>
        <end position="348"/>
    </location>
</feature>
<protein>
    <recommendedName>
        <fullName evidence="13">Hsp70-binding protein 1</fullName>
        <shortName>HspBP1</shortName>
    </recommendedName>
    <alternativeName>
        <fullName>Heat shock protein-binding protein 1</fullName>
    </alternativeName>
    <alternativeName>
        <fullName>Hsp70-binding protein 2</fullName>
        <shortName>HspBP2</shortName>
    </alternativeName>
    <alternativeName>
        <fullName>Hsp70-interacting protein 1</fullName>
    </alternativeName>
    <alternativeName>
        <fullName>Hsp70-interacting protein 2</fullName>
    </alternativeName>
</protein>
<accession>Q9NZL4</accession>
<accession>B3KQP0</accession>
<accession>B4DG11</accession>
<accession>O95351</accession>
<accession>Q6ZNU5</accession>
<comment type="function">
    <text evidence="2 3 5 10 11">Inhibits HSPA1A chaperone activity by changing the conformation of the ATP-binding domain of HSPA1A and interfering with ATP binding. Interferes with ubiquitination mediated by STUB1 and inhibits chaperone-assisted degradation of immature CFTR.</text>
</comment>
<comment type="subunit">
    <text evidence="3 5 8 10 11">Interacts with the ATP-binding domain of HSPA1A. Detected in a ternary complex containing STUB1, HSPA1A and HSPBP1. Interacts with PGLYRP1; this interaction blocks the cytotoxic activity of the PGLYRP1-HSPA1A complex (PubMed:21247889).</text>
</comment>
<comment type="interaction">
    <interactant intactId="EBI-356763">
        <id>Q9NZL4</id>
    </interactant>
    <interactant intactId="EBI-765526">
        <id>P32519</id>
        <label>ELF1</label>
    </interactant>
    <organismsDiffer>false</organismsDiffer>
    <experiments>2</experiments>
</comment>
<comment type="interaction">
    <interactant intactId="EBI-356763">
        <id>Q9NZL4</id>
    </interactant>
    <interactant intactId="EBI-356991">
        <id>P54652</id>
        <label>HSPA2</label>
    </interactant>
    <organismsDiffer>false</organismsDiffer>
    <experiments>9</experiments>
</comment>
<comment type="interaction">
    <interactant intactId="EBI-356763">
        <id>Q9NZL4</id>
    </interactant>
    <interactant intactId="EBI-351896">
        <id>P11142</id>
        <label>HSPA8</label>
    </interactant>
    <organismsDiffer>false</organismsDiffer>
    <experiments>15</experiments>
</comment>
<comment type="interaction">
    <interactant intactId="EBI-356763">
        <id>Q9NZL4</id>
    </interactant>
    <interactant intactId="EBI-10289199">
        <id>Q96IS6</id>
        <label>HSPA8</label>
    </interactant>
    <organismsDiffer>false</organismsDiffer>
    <experiments>5</experiments>
</comment>
<comment type="interaction">
    <interactant intactId="EBI-356763">
        <id>Q9NZL4</id>
    </interactant>
    <interactant intactId="EBI-945833">
        <id>Q7Z3S9</id>
        <label>NOTCH2NLA</label>
    </interactant>
    <organismsDiffer>false</organismsDiffer>
    <experiments>4</experiments>
</comment>
<comment type="alternative products">
    <event type="alternative splicing"/>
    <isoform>
        <id>Q9NZL4-1</id>
        <name>1</name>
        <sequence type="displayed"/>
    </isoform>
    <isoform>
        <id>Q9NZL4-2</id>
        <name>2</name>
        <sequence type="described" ref="VSP_015945"/>
    </isoform>
    <isoform>
        <id>Q9NZL4-3</id>
        <name>3</name>
        <sequence type="described" ref="VSP_053681 VSP_053682"/>
    </isoform>
</comment>
<comment type="tissue specificity">
    <text evidence="11">Ubiquitous.</text>
</comment>
<sequence length="359" mass="39303">MSDEGSRGSRLPLALPPASQGCSSGGGGGGSSAGGSGNSRPPRNLQGLLQMAITAGSEEPDPPPEPMSEERRQWLQEAMSAAFRGQREEVEQMKSCLRVLSQPMPPTAGEAEQAADQQEREGALELLADLCENMDNAADFCQLSGMHLLVGRYLEAGAAGLRWRAAQLIGTCSQNVAAIQEQVLGLGALRKLLRLLDRDACDTVRVKALFAISCLVREQEAGLLQFLRLDGFSVLMRAMQQQVQKLKVKSAFLLQNLLVGHPEHKGTLCSMGMVQQLVALVRTEHSPFHEHVLGALCSLVTDFPQGVRECREPELGLEELLRHRCQLLQQHEEYQEELEFCEKLLQTCFSSPADDSMDR</sequence>
<keyword id="KW-0002">3D-structure</keyword>
<keyword id="KW-0025">Alternative splicing</keyword>
<keyword id="KW-0597">Phosphoprotein</keyword>
<keyword id="KW-1267">Proteomics identification</keyword>
<keyword id="KW-1185">Reference proteome</keyword>
<keyword id="KW-0677">Repeat</keyword>
<gene>
    <name evidence="14" type="primary">HSPBP1</name>
    <name type="synonym">HSPBP</name>
    <name type="ORF">PP1845</name>
</gene>
<organism>
    <name type="scientific">Homo sapiens</name>
    <name type="common">Human</name>
    <dbReference type="NCBI Taxonomy" id="9606"/>
    <lineage>
        <taxon>Eukaryota</taxon>
        <taxon>Metazoa</taxon>
        <taxon>Chordata</taxon>
        <taxon>Craniata</taxon>
        <taxon>Vertebrata</taxon>
        <taxon>Euteleostomi</taxon>
        <taxon>Mammalia</taxon>
        <taxon>Eutheria</taxon>
        <taxon>Euarchontoglires</taxon>
        <taxon>Primates</taxon>
        <taxon>Haplorrhini</taxon>
        <taxon>Catarrhini</taxon>
        <taxon>Hominidae</taxon>
        <taxon>Homo</taxon>
    </lineage>
</organism>
<name>HPBP1_HUMAN</name>
<proteinExistence type="evidence at protein level"/>